<accession>A8F988</accession>
<sequence>MAIKKYKPTSNGRRGMTTSDFAEITTDKPEKSLLAPLHRKGGRNNQGRLTVRHQGGGHKRQYRIIDFKRDKDGIPGRVATIEYDPNRSANIALVNYADGEKRYILAPKGIQVGTEVTSGPEADIKPGNALPLINIPVGTVVHNIELKPGKGGQLVRSAGTSAQVLGKEGKYVLVRLNSGEVRMILSACRATIGQVGNEQHELINIGKAGRSRWKGVRPTVRGSVMNPNDHPHGGGEGRAPIGRKSPMSPWGKPTLGFKTRKKTNKSDKFIVRRRKNK</sequence>
<name>RL2_BACP2</name>
<proteinExistence type="inferred from homology"/>
<protein>
    <recommendedName>
        <fullName evidence="1">Large ribosomal subunit protein uL2</fullName>
    </recommendedName>
    <alternativeName>
        <fullName evidence="3">50S ribosomal protein L2</fullName>
    </alternativeName>
</protein>
<comment type="function">
    <text evidence="1">One of the primary rRNA binding proteins. Required for association of the 30S and 50S subunits to form the 70S ribosome, for tRNA binding and peptide bond formation. It has been suggested to have peptidyltransferase activity; this is somewhat controversial. Makes several contacts with the 16S rRNA in the 70S ribosome.</text>
</comment>
<comment type="subunit">
    <text evidence="1">Part of the 50S ribosomal subunit. Forms a bridge to the 30S subunit in the 70S ribosome.</text>
</comment>
<comment type="similarity">
    <text evidence="1">Belongs to the universal ribosomal protein uL2 family.</text>
</comment>
<keyword id="KW-0687">Ribonucleoprotein</keyword>
<keyword id="KW-0689">Ribosomal protein</keyword>
<keyword id="KW-0694">RNA-binding</keyword>
<keyword id="KW-0699">rRNA-binding</keyword>
<feature type="chain" id="PRO_1000067538" description="Large ribosomal subunit protein uL2">
    <location>
        <begin position="1"/>
        <end position="277"/>
    </location>
</feature>
<feature type="region of interest" description="Disordered" evidence="2">
    <location>
        <begin position="38"/>
        <end position="58"/>
    </location>
</feature>
<feature type="region of interest" description="Disordered" evidence="2">
    <location>
        <begin position="219"/>
        <end position="277"/>
    </location>
</feature>
<organism>
    <name type="scientific">Bacillus pumilus (strain SAFR-032)</name>
    <dbReference type="NCBI Taxonomy" id="315750"/>
    <lineage>
        <taxon>Bacteria</taxon>
        <taxon>Bacillati</taxon>
        <taxon>Bacillota</taxon>
        <taxon>Bacilli</taxon>
        <taxon>Bacillales</taxon>
        <taxon>Bacillaceae</taxon>
        <taxon>Bacillus</taxon>
    </lineage>
</organism>
<evidence type="ECO:0000255" key="1">
    <source>
        <dbReference type="HAMAP-Rule" id="MF_01320"/>
    </source>
</evidence>
<evidence type="ECO:0000256" key="2">
    <source>
        <dbReference type="SAM" id="MobiDB-lite"/>
    </source>
</evidence>
<evidence type="ECO:0000305" key="3"/>
<reference key="1">
    <citation type="journal article" date="2007" name="PLoS ONE">
        <title>Paradoxical DNA repair and peroxide resistance gene conservation in Bacillus pumilus SAFR-032.</title>
        <authorList>
            <person name="Gioia J."/>
            <person name="Yerrapragada S."/>
            <person name="Qin X."/>
            <person name="Jiang H."/>
            <person name="Igboeli O.C."/>
            <person name="Muzny D."/>
            <person name="Dugan-Rocha S."/>
            <person name="Ding Y."/>
            <person name="Hawes A."/>
            <person name="Liu W."/>
            <person name="Perez L."/>
            <person name="Kovar C."/>
            <person name="Dinh H."/>
            <person name="Lee S."/>
            <person name="Nazareth L."/>
            <person name="Blyth P."/>
            <person name="Holder M."/>
            <person name="Buhay C."/>
            <person name="Tirumalai M.R."/>
            <person name="Liu Y."/>
            <person name="Dasgupta I."/>
            <person name="Bokhetache L."/>
            <person name="Fujita M."/>
            <person name="Karouia F."/>
            <person name="Eswara Moorthy P."/>
            <person name="Siefert J."/>
            <person name="Uzman A."/>
            <person name="Buzumbo P."/>
            <person name="Verma A."/>
            <person name="Zwiya H."/>
            <person name="McWilliams B.D."/>
            <person name="Olowu A."/>
            <person name="Clinkenbeard K.D."/>
            <person name="Newcombe D."/>
            <person name="Golebiewski L."/>
            <person name="Petrosino J.F."/>
            <person name="Nicholson W.L."/>
            <person name="Fox G.E."/>
            <person name="Venkateswaran K."/>
            <person name="Highlander S.K."/>
            <person name="Weinstock G.M."/>
        </authorList>
    </citation>
    <scope>NUCLEOTIDE SEQUENCE [LARGE SCALE GENOMIC DNA]</scope>
    <source>
        <strain>SAFR-032</strain>
    </source>
</reference>
<gene>
    <name evidence="1" type="primary">rplB</name>
    <name type="ordered locus">BPUM_0105</name>
</gene>
<dbReference type="EMBL" id="CP000813">
    <property type="protein sequence ID" value="ABV60805.1"/>
    <property type="molecule type" value="Genomic_DNA"/>
</dbReference>
<dbReference type="RefSeq" id="WP_007496314.1">
    <property type="nucleotide sequence ID" value="NZ_VEIS01000020.1"/>
</dbReference>
<dbReference type="SMR" id="A8F988"/>
<dbReference type="STRING" id="315750.BPUM_0105"/>
<dbReference type="GeneID" id="66361736"/>
<dbReference type="KEGG" id="bpu:BPUM_0105"/>
<dbReference type="eggNOG" id="COG0090">
    <property type="taxonomic scope" value="Bacteria"/>
</dbReference>
<dbReference type="HOGENOM" id="CLU_036235_2_1_9"/>
<dbReference type="OrthoDB" id="9778722at2"/>
<dbReference type="Proteomes" id="UP000001355">
    <property type="component" value="Chromosome"/>
</dbReference>
<dbReference type="GO" id="GO:0015934">
    <property type="term" value="C:large ribosomal subunit"/>
    <property type="evidence" value="ECO:0007669"/>
    <property type="project" value="InterPro"/>
</dbReference>
<dbReference type="GO" id="GO:0019843">
    <property type="term" value="F:rRNA binding"/>
    <property type="evidence" value="ECO:0007669"/>
    <property type="project" value="UniProtKB-UniRule"/>
</dbReference>
<dbReference type="GO" id="GO:0003735">
    <property type="term" value="F:structural constituent of ribosome"/>
    <property type="evidence" value="ECO:0007669"/>
    <property type="project" value="InterPro"/>
</dbReference>
<dbReference type="GO" id="GO:0016740">
    <property type="term" value="F:transferase activity"/>
    <property type="evidence" value="ECO:0007669"/>
    <property type="project" value="InterPro"/>
</dbReference>
<dbReference type="GO" id="GO:0002181">
    <property type="term" value="P:cytoplasmic translation"/>
    <property type="evidence" value="ECO:0007669"/>
    <property type="project" value="TreeGrafter"/>
</dbReference>
<dbReference type="FunFam" id="2.30.30.30:FF:000001">
    <property type="entry name" value="50S ribosomal protein L2"/>
    <property type="match status" value="1"/>
</dbReference>
<dbReference type="FunFam" id="2.40.50.140:FF:000003">
    <property type="entry name" value="50S ribosomal protein L2"/>
    <property type="match status" value="1"/>
</dbReference>
<dbReference type="FunFam" id="4.10.950.10:FF:000001">
    <property type="entry name" value="50S ribosomal protein L2"/>
    <property type="match status" value="1"/>
</dbReference>
<dbReference type="Gene3D" id="2.30.30.30">
    <property type="match status" value="1"/>
</dbReference>
<dbReference type="Gene3D" id="2.40.50.140">
    <property type="entry name" value="Nucleic acid-binding proteins"/>
    <property type="match status" value="1"/>
</dbReference>
<dbReference type="Gene3D" id="4.10.950.10">
    <property type="entry name" value="Ribosomal protein L2, domain 3"/>
    <property type="match status" value="1"/>
</dbReference>
<dbReference type="HAMAP" id="MF_01320_B">
    <property type="entry name" value="Ribosomal_uL2_B"/>
    <property type="match status" value="1"/>
</dbReference>
<dbReference type="InterPro" id="IPR012340">
    <property type="entry name" value="NA-bd_OB-fold"/>
</dbReference>
<dbReference type="InterPro" id="IPR014722">
    <property type="entry name" value="Rib_uL2_dom2"/>
</dbReference>
<dbReference type="InterPro" id="IPR002171">
    <property type="entry name" value="Ribosomal_uL2"/>
</dbReference>
<dbReference type="InterPro" id="IPR005880">
    <property type="entry name" value="Ribosomal_uL2_bac/org-type"/>
</dbReference>
<dbReference type="InterPro" id="IPR022669">
    <property type="entry name" value="Ribosomal_uL2_C"/>
</dbReference>
<dbReference type="InterPro" id="IPR022671">
    <property type="entry name" value="Ribosomal_uL2_CS"/>
</dbReference>
<dbReference type="InterPro" id="IPR014726">
    <property type="entry name" value="Ribosomal_uL2_dom3"/>
</dbReference>
<dbReference type="InterPro" id="IPR022666">
    <property type="entry name" value="Ribosomal_uL2_RNA-bd_dom"/>
</dbReference>
<dbReference type="InterPro" id="IPR008991">
    <property type="entry name" value="Translation_prot_SH3-like_sf"/>
</dbReference>
<dbReference type="NCBIfam" id="TIGR01171">
    <property type="entry name" value="rplB_bact"/>
    <property type="match status" value="1"/>
</dbReference>
<dbReference type="PANTHER" id="PTHR13691:SF5">
    <property type="entry name" value="LARGE RIBOSOMAL SUBUNIT PROTEIN UL2M"/>
    <property type="match status" value="1"/>
</dbReference>
<dbReference type="PANTHER" id="PTHR13691">
    <property type="entry name" value="RIBOSOMAL PROTEIN L2"/>
    <property type="match status" value="1"/>
</dbReference>
<dbReference type="Pfam" id="PF00181">
    <property type="entry name" value="Ribosomal_L2"/>
    <property type="match status" value="1"/>
</dbReference>
<dbReference type="Pfam" id="PF03947">
    <property type="entry name" value="Ribosomal_L2_C"/>
    <property type="match status" value="1"/>
</dbReference>
<dbReference type="PIRSF" id="PIRSF002158">
    <property type="entry name" value="Ribosomal_L2"/>
    <property type="match status" value="1"/>
</dbReference>
<dbReference type="SMART" id="SM01383">
    <property type="entry name" value="Ribosomal_L2"/>
    <property type="match status" value="1"/>
</dbReference>
<dbReference type="SMART" id="SM01382">
    <property type="entry name" value="Ribosomal_L2_C"/>
    <property type="match status" value="1"/>
</dbReference>
<dbReference type="SUPFAM" id="SSF50249">
    <property type="entry name" value="Nucleic acid-binding proteins"/>
    <property type="match status" value="1"/>
</dbReference>
<dbReference type="SUPFAM" id="SSF50104">
    <property type="entry name" value="Translation proteins SH3-like domain"/>
    <property type="match status" value="1"/>
</dbReference>
<dbReference type="PROSITE" id="PS00467">
    <property type="entry name" value="RIBOSOMAL_L2"/>
    <property type="match status" value="1"/>
</dbReference>